<sequence length="617" mass="68299">MAIETQLPCDGDGVCMRCQVNPPSEETLTCGTCVTPWHVPCLLPESLASSTGEWECPDCSGVVVPSAAPGTGNARPESSGSVLVAAIRAIQADETLTEAEKAKKRQKLMSGGGDDGVDEEEKKKLEIFCSICIQLPERPITTPCGHNFCLKCFEKWAVGQGKLTCMICRSKIPRHVAKNPRINLALVSAIRLANVTKCSVEATAAKVHHIIRNQDRPEKAFTTERAVKTGKANAASGKFFVTIPRDHFGPIPAENDVTRKQGVLVGESWEDRQECRQWGAHFPHIAGIAGQSAVGAQSVALSGGYDDDEDHGEWFLYTGSGGRDLSGNKRINKKQSSDQAFKNMNESLRLSCKMGYPVRVVRSWKEKRSAYAPAEGVRYDGVYRIEKCWSNVGVQGSFKVCRYLFVRCDNEPAPWTSDEHGDRPRPLPNVPELETAADLFVRKESPSWDFDEAEGRWKWMKSPPVSRMALDPEERKKNKRAKNTMKARLLKEFSCQICREVLSLPVTTPCAHNFCKACLEAKFAGITQLRERSNGGRKLRAKKNIMTCPCCTTDLSEFLQNPQVNREMMEIIENFKKSEEEADASISEEEEEESEPPTKKIKMDNNSVGGSGTSLSA</sequence>
<feature type="chain" id="PRO_0000396825" description="E3 ubiquitin-protein ligase ORTHRUS 1">
    <location>
        <begin position="1"/>
        <end position="617"/>
    </location>
</feature>
<feature type="domain" description="YDG" evidence="4">
    <location>
        <begin position="258"/>
        <end position="407"/>
    </location>
</feature>
<feature type="zinc finger region" description="PHD-type">
    <location>
        <begin position="12"/>
        <end position="62"/>
    </location>
</feature>
<feature type="zinc finger region" description="RING-type 1" evidence="3">
    <location>
        <begin position="129"/>
        <end position="169"/>
    </location>
</feature>
<feature type="zinc finger region" description="RING-type 2" evidence="3">
    <location>
        <begin position="495"/>
        <end position="552"/>
    </location>
</feature>
<feature type="region of interest" description="Disordered" evidence="5">
    <location>
        <begin position="575"/>
        <end position="617"/>
    </location>
</feature>
<feature type="coiled-coil region" evidence="2">
    <location>
        <begin position="563"/>
        <end position="593"/>
    </location>
</feature>
<feature type="compositionally biased region" description="Acidic residues" evidence="5">
    <location>
        <begin position="580"/>
        <end position="595"/>
    </location>
</feature>
<feature type="compositionally biased region" description="Polar residues" evidence="5">
    <location>
        <begin position="604"/>
        <end position="617"/>
    </location>
</feature>
<feature type="mutagenesis site" description="Loss of DNA binding activity." evidence="6">
    <original>S</original>
    <variation>F</variation>
    <location>
        <position position="292"/>
    </location>
</feature>
<feature type="mutagenesis site" description="Loss of DNA binding activity." evidence="6">
    <original>R</original>
    <variation>H</variation>
    <location>
        <position position="362"/>
    </location>
</feature>
<feature type="sequence conflict" description="In Ref. 4; BAD44541." evidence="9" ref="4">
    <original>L</original>
    <variation>Q</variation>
    <location>
        <position position="439"/>
    </location>
</feature>
<reference key="1">
    <citation type="journal article" date="1998" name="DNA Res.">
        <title>Structural analysis of Arabidopsis thaliana chromosome 5. VI. Sequence features of the regions of 1,367,185 bp covered by 19 physically assigned P1 and TAC clones.</title>
        <authorList>
            <person name="Kotani H."/>
            <person name="Nakamura Y."/>
            <person name="Sato S."/>
            <person name="Asamizu E."/>
            <person name="Kaneko T."/>
            <person name="Miyajima N."/>
            <person name="Tabata S."/>
        </authorList>
    </citation>
    <scope>NUCLEOTIDE SEQUENCE [LARGE SCALE GENOMIC DNA]</scope>
    <source>
        <strain>cv. Columbia</strain>
    </source>
</reference>
<reference key="2">
    <citation type="journal article" date="2017" name="Plant J.">
        <title>Araport11: a complete reannotation of the Arabidopsis thaliana reference genome.</title>
        <authorList>
            <person name="Cheng C.Y."/>
            <person name="Krishnakumar V."/>
            <person name="Chan A.P."/>
            <person name="Thibaud-Nissen F."/>
            <person name="Schobel S."/>
            <person name="Town C.D."/>
        </authorList>
    </citation>
    <scope>GENOME REANNOTATION</scope>
    <source>
        <strain>cv. Columbia</strain>
    </source>
</reference>
<reference key="3">
    <citation type="journal article" date="2003" name="Science">
        <title>Empirical analysis of transcriptional activity in the Arabidopsis genome.</title>
        <authorList>
            <person name="Yamada K."/>
            <person name="Lim J."/>
            <person name="Dale J.M."/>
            <person name="Chen H."/>
            <person name="Shinn P."/>
            <person name="Palm C.J."/>
            <person name="Southwick A.M."/>
            <person name="Wu H.C."/>
            <person name="Kim C.J."/>
            <person name="Nguyen M."/>
            <person name="Pham P.K."/>
            <person name="Cheuk R.F."/>
            <person name="Karlin-Newmann G."/>
            <person name="Liu S.X."/>
            <person name="Lam B."/>
            <person name="Sakano H."/>
            <person name="Wu T."/>
            <person name="Yu G."/>
            <person name="Miranda M."/>
            <person name="Quach H.L."/>
            <person name="Tripp M."/>
            <person name="Chang C.H."/>
            <person name="Lee J.M."/>
            <person name="Toriumi M.J."/>
            <person name="Chan M.M."/>
            <person name="Tang C.C."/>
            <person name="Onodera C.S."/>
            <person name="Deng J.M."/>
            <person name="Akiyama K."/>
            <person name="Ansari Y."/>
            <person name="Arakawa T."/>
            <person name="Banh J."/>
            <person name="Banno F."/>
            <person name="Bowser L."/>
            <person name="Brooks S.Y."/>
            <person name="Carninci P."/>
            <person name="Chao Q."/>
            <person name="Choy N."/>
            <person name="Enju A."/>
            <person name="Goldsmith A.D."/>
            <person name="Gurjal M."/>
            <person name="Hansen N.F."/>
            <person name="Hayashizaki Y."/>
            <person name="Johnson-Hopson C."/>
            <person name="Hsuan V.W."/>
            <person name="Iida K."/>
            <person name="Karnes M."/>
            <person name="Khan S."/>
            <person name="Koesema E."/>
            <person name="Ishida J."/>
            <person name="Jiang P.X."/>
            <person name="Jones T."/>
            <person name="Kawai J."/>
            <person name="Kamiya A."/>
            <person name="Meyers C."/>
            <person name="Nakajima M."/>
            <person name="Narusaka M."/>
            <person name="Seki M."/>
            <person name="Sakurai T."/>
            <person name="Satou M."/>
            <person name="Tamse R."/>
            <person name="Vaysberg M."/>
            <person name="Wallender E.K."/>
            <person name="Wong C."/>
            <person name="Yamamura Y."/>
            <person name="Yuan S."/>
            <person name="Shinozaki K."/>
            <person name="Davis R.W."/>
            <person name="Theologis A."/>
            <person name="Ecker J.R."/>
        </authorList>
    </citation>
    <scope>NUCLEOTIDE SEQUENCE [LARGE SCALE MRNA]</scope>
    <source>
        <strain>cv. Columbia</strain>
    </source>
</reference>
<reference key="4">
    <citation type="submission" date="2005-03" db="EMBL/GenBank/DDBJ databases">
        <title>Large-scale analysis of RIKEN Arabidopsis full-length (RAFL) cDNAs.</title>
        <authorList>
            <person name="Totoki Y."/>
            <person name="Seki M."/>
            <person name="Ishida J."/>
            <person name="Nakajima M."/>
            <person name="Enju A."/>
            <person name="Kamiya A."/>
            <person name="Narusaka M."/>
            <person name="Shin-i T."/>
            <person name="Nakagawa M."/>
            <person name="Sakamoto N."/>
            <person name="Oishi K."/>
            <person name="Kohara Y."/>
            <person name="Kobayashi M."/>
            <person name="Toyoda A."/>
            <person name="Sakaki Y."/>
            <person name="Sakurai T."/>
            <person name="Iida K."/>
            <person name="Akiyama K."/>
            <person name="Satou M."/>
            <person name="Toyoda T."/>
            <person name="Konagaya A."/>
            <person name="Carninci P."/>
            <person name="Kawai J."/>
            <person name="Hayashizaki Y."/>
            <person name="Shinozaki K."/>
        </authorList>
    </citation>
    <scope>NUCLEOTIDE SEQUENCE [LARGE SCALE MRNA]</scope>
    <source>
        <strain>cv. Columbia</strain>
    </source>
</reference>
<reference key="5">
    <citation type="journal article" date="2002" name="Genome Biol.">
        <title>Evaluation and classification of RING-finger domains encoded by the Arabidopsis genome.</title>
        <authorList>
            <person name="Kosarev P."/>
            <person name="Mayer K.F.X."/>
            <person name="Hardtke C.S."/>
        </authorList>
    </citation>
    <scope>GENE FAMILY ORGANIZATION</scope>
</reference>
<reference key="6">
    <citation type="journal article" date="2007" name="Curr. Biol.">
        <title>The SRA methyl-cytosine-binding domain links DNA and histone methylation.</title>
        <authorList>
            <person name="Johnson L.M."/>
            <person name="Bostick M."/>
            <person name="Zhang X."/>
            <person name="Kraft E."/>
            <person name="Henderson I."/>
            <person name="Callis J."/>
            <person name="Jacobsen S.E."/>
        </authorList>
    </citation>
    <scope>FUNCTION</scope>
    <scope>MUTAGENESIS OF SER-292 AND ARG-362</scope>
</reference>
<reference key="7">
    <citation type="journal article" date="2008" name="Plant J.">
        <title>ORTH/VIM proteins that regulate DNA methylation are functional ubiquitin E3 ligases.</title>
        <authorList>
            <person name="Kraft E."/>
            <person name="Bostick M."/>
            <person name="Jacobsen S.E."/>
            <person name="Callis J."/>
        </authorList>
    </citation>
    <scope>FUNCTION</scope>
    <scope>SUBCELLULAR LOCATION</scope>
    <scope>RING FINGER FUNCTION</scope>
    <scope>GENE FAMILY</scope>
    <scope>NOMENCLATURE</scope>
</reference>
<reference key="8">
    <citation type="journal article" date="2008" name="PLoS Genet.">
        <title>Three SRA-domain methylcytosine-binding proteins cooperate to maintain global CpG methylation and epigenetic silencing in Arabidopsis.</title>
        <authorList>
            <person name="Woo H.R."/>
            <person name="Dittmer T.A."/>
            <person name="Richards E.J."/>
        </authorList>
    </citation>
    <scope>FUNCTION</scope>
    <scope>DISRUPTION PHENOTYPE</scope>
    <scope>TISSUE SPECIFICITY</scope>
    <scope>SUBCELLULAR LOCATION</scope>
</reference>
<evidence type="ECO:0000250" key="1"/>
<evidence type="ECO:0000255" key="2"/>
<evidence type="ECO:0000255" key="3">
    <source>
        <dbReference type="PROSITE-ProRule" id="PRU00175"/>
    </source>
</evidence>
<evidence type="ECO:0000255" key="4">
    <source>
        <dbReference type="PROSITE-ProRule" id="PRU00358"/>
    </source>
</evidence>
<evidence type="ECO:0000256" key="5">
    <source>
        <dbReference type="SAM" id="MobiDB-lite"/>
    </source>
</evidence>
<evidence type="ECO:0000269" key="6">
    <source>
    </source>
</evidence>
<evidence type="ECO:0000269" key="7">
    <source>
    </source>
</evidence>
<evidence type="ECO:0000269" key="8">
    <source>
    </source>
</evidence>
<evidence type="ECO:0000305" key="9"/>
<organism>
    <name type="scientific">Arabidopsis thaliana</name>
    <name type="common">Mouse-ear cress</name>
    <dbReference type="NCBI Taxonomy" id="3702"/>
    <lineage>
        <taxon>Eukaryota</taxon>
        <taxon>Viridiplantae</taxon>
        <taxon>Streptophyta</taxon>
        <taxon>Embryophyta</taxon>
        <taxon>Tracheophyta</taxon>
        <taxon>Spermatophyta</taxon>
        <taxon>Magnoliopsida</taxon>
        <taxon>eudicotyledons</taxon>
        <taxon>Gunneridae</taxon>
        <taxon>Pentapetalae</taxon>
        <taxon>rosids</taxon>
        <taxon>malvids</taxon>
        <taxon>Brassicales</taxon>
        <taxon>Brassicaceae</taxon>
        <taxon>Camelineae</taxon>
        <taxon>Arabidopsis</taxon>
    </lineage>
</organism>
<dbReference type="EC" id="2.3.2.27"/>
<dbReference type="EMBL" id="AB012243">
    <property type="protein sequence ID" value="BAB08886.1"/>
    <property type="molecule type" value="Genomic_DNA"/>
</dbReference>
<dbReference type="EMBL" id="CP002688">
    <property type="protein sequence ID" value="AED94446.1"/>
    <property type="molecule type" value="Genomic_DNA"/>
</dbReference>
<dbReference type="EMBL" id="BT010573">
    <property type="protein sequence ID" value="AAQ65196.1"/>
    <property type="molecule type" value="mRNA"/>
</dbReference>
<dbReference type="EMBL" id="AK176778">
    <property type="protein sequence ID" value="BAD44541.1"/>
    <property type="molecule type" value="mRNA"/>
</dbReference>
<dbReference type="EMBL" id="AK221256">
    <property type="protein sequence ID" value="BAD93904.1"/>
    <property type="molecule type" value="mRNA"/>
</dbReference>
<dbReference type="RefSeq" id="NP_198771.1">
    <property type="nucleotide sequence ID" value="NM_123317.4"/>
</dbReference>
<dbReference type="SMR" id="Q9FKA7"/>
<dbReference type="FunCoup" id="Q9FKA7">
    <property type="interactions" value="2183"/>
</dbReference>
<dbReference type="STRING" id="3702.Q9FKA7"/>
<dbReference type="iPTMnet" id="Q9FKA7"/>
<dbReference type="PaxDb" id="3702-AT5G39550.1"/>
<dbReference type="ProteomicsDB" id="248667"/>
<dbReference type="EnsemblPlants" id="AT5G39550.1">
    <property type="protein sequence ID" value="AT5G39550.1"/>
    <property type="gene ID" value="AT5G39550"/>
</dbReference>
<dbReference type="GeneID" id="833951"/>
<dbReference type="Gramene" id="AT5G39550.1">
    <property type="protein sequence ID" value="AT5G39550.1"/>
    <property type="gene ID" value="AT5G39550"/>
</dbReference>
<dbReference type="KEGG" id="ath:AT5G39550"/>
<dbReference type="Araport" id="AT5G39550"/>
<dbReference type="TAIR" id="AT5G39550">
    <property type="gene designation" value="VIM3"/>
</dbReference>
<dbReference type="eggNOG" id="ENOG502QRDQ">
    <property type="taxonomic scope" value="Eukaryota"/>
</dbReference>
<dbReference type="HOGENOM" id="CLU_016281_0_0_1"/>
<dbReference type="InParanoid" id="Q9FKA7"/>
<dbReference type="OMA" id="RKPVQCE"/>
<dbReference type="PhylomeDB" id="Q9FKA7"/>
<dbReference type="UniPathway" id="UPA00143"/>
<dbReference type="PRO" id="PR:Q9FKA7"/>
<dbReference type="Proteomes" id="UP000006548">
    <property type="component" value="Chromosome 5"/>
</dbReference>
<dbReference type="ExpressionAtlas" id="Q9FKA7">
    <property type="expression patterns" value="baseline and differential"/>
</dbReference>
<dbReference type="GO" id="GO:0005634">
    <property type="term" value="C:nucleus"/>
    <property type="evidence" value="ECO:0000314"/>
    <property type="project" value="UniProtKB"/>
</dbReference>
<dbReference type="GO" id="GO:0042393">
    <property type="term" value="F:histone binding"/>
    <property type="evidence" value="ECO:0000250"/>
    <property type="project" value="UniProtKB"/>
</dbReference>
<dbReference type="GO" id="GO:0008327">
    <property type="term" value="F:methyl-CpG binding"/>
    <property type="evidence" value="ECO:0000314"/>
    <property type="project" value="TAIR"/>
</dbReference>
<dbReference type="GO" id="GO:0010428">
    <property type="term" value="F:methyl-CpNpG binding"/>
    <property type="evidence" value="ECO:0000314"/>
    <property type="project" value="TAIR"/>
</dbReference>
<dbReference type="GO" id="GO:0010429">
    <property type="term" value="F:methyl-CpNpN binding"/>
    <property type="evidence" value="ECO:0000314"/>
    <property type="project" value="TAIR"/>
</dbReference>
<dbReference type="GO" id="GO:0004842">
    <property type="term" value="F:ubiquitin-protein transferase activity"/>
    <property type="evidence" value="ECO:0000314"/>
    <property type="project" value="TAIR"/>
</dbReference>
<dbReference type="GO" id="GO:0008270">
    <property type="term" value="F:zinc ion binding"/>
    <property type="evidence" value="ECO:0007669"/>
    <property type="project" value="UniProtKB-KW"/>
</dbReference>
<dbReference type="GO" id="GO:0044027">
    <property type="term" value="P:negative regulation of gene expression via chromosomal CpG island methylation"/>
    <property type="evidence" value="ECO:0000315"/>
    <property type="project" value="UniProtKB"/>
</dbReference>
<dbReference type="GO" id="GO:0016567">
    <property type="term" value="P:protein ubiquitination"/>
    <property type="evidence" value="ECO:0000314"/>
    <property type="project" value="TAIR"/>
</dbReference>
<dbReference type="GO" id="GO:0010228">
    <property type="term" value="P:vegetative to reproductive phase transition of meristem"/>
    <property type="evidence" value="ECO:0000315"/>
    <property type="project" value="TAIR"/>
</dbReference>
<dbReference type="CDD" id="cd23138">
    <property type="entry name" value="RING-HC_ORTHRUS_rpt1"/>
    <property type="match status" value="1"/>
</dbReference>
<dbReference type="CDD" id="cd23139">
    <property type="entry name" value="RING-HC_ORTHRUS_rpt2"/>
    <property type="match status" value="1"/>
</dbReference>
<dbReference type="FunFam" id="2.30.280.10:FF:000002">
    <property type="entry name" value="E3 ubiquitin-protein ligase ORTHRUS 2"/>
    <property type="match status" value="1"/>
</dbReference>
<dbReference type="FunFam" id="3.30.40.10:FF:001023">
    <property type="entry name" value="E3 ubiquitin-protein ligase ORTHRUS 2"/>
    <property type="match status" value="1"/>
</dbReference>
<dbReference type="FunFam" id="3.30.40.10:FF:000737">
    <property type="entry name" value="E3 ubiquitin-protein ligase ORTHRUS 3"/>
    <property type="match status" value="1"/>
</dbReference>
<dbReference type="Gene3D" id="2.30.280.10">
    <property type="entry name" value="SRA-YDG"/>
    <property type="match status" value="1"/>
</dbReference>
<dbReference type="Gene3D" id="3.30.40.10">
    <property type="entry name" value="Zinc/RING finger domain, C3HC4 (zinc finger)"/>
    <property type="match status" value="3"/>
</dbReference>
<dbReference type="InterPro" id="IPR015947">
    <property type="entry name" value="PUA-like_sf"/>
</dbReference>
<dbReference type="InterPro" id="IPR047498">
    <property type="entry name" value="RING-HC_ORTHRUS_rpt1"/>
</dbReference>
<dbReference type="InterPro" id="IPR047529">
    <property type="entry name" value="RING-HC_ORTHRUS_rpt2"/>
</dbReference>
<dbReference type="InterPro" id="IPR036987">
    <property type="entry name" value="SRA-YDG_sf"/>
</dbReference>
<dbReference type="InterPro" id="IPR003105">
    <property type="entry name" value="SRA_YDG"/>
</dbReference>
<dbReference type="InterPro" id="IPR045134">
    <property type="entry name" value="UHRF1/2-like"/>
</dbReference>
<dbReference type="InterPro" id="IPR019786">
    <property type="entry name" value="Zinc_finger_PHD-type_CS"/>
</dbReference>
<dbReference type="InterPro" id="IPR027370">
    <property type="entry name" value="Znf-RING_euk"/>
</dbReference>
<dbReference type="InterPro" id="IPR011011">
    <property type="entry name" value="Znf_FYVE_PHD"/>
</dbReference>
<dbReference type="InterPro" id="IPR001965">
    <property type="entry name" value="Znf_PHD"/>
</dbReference>
<dbReference type="InterPro" id="IPR001841">
    <property type="entry name" value="Znf_RING"/>
</dbReference>
<dbReference type="InterPro" id="IPR013083">
    <property type="entry name" value="Znf_RING/FYVE/PHD"/>
</dbReference>
<dbReference type="InterPro" id="IPR017907">
    <property type="entry name" value="Znf_RING_CS"/>
</dbReference>
<dbReference type="PANTHER" id="PTHR14140:SF46">
    <property type="entry name" value="E3 UBIQUITIN-PROTEIN LIGASE ORTHRUS 1-RELATED"/>
    <property type="match status" value="1"/>
</dbReference>
<dbReference type="PANTHER" id="PTHR14140">
    <property type="entry name" value="E3 UBIQUITIN-PROTEIN LIGASE UHRF-RELATED"/>
    <property type="match status" value="1"/>
</dbReference>
<dbReference type="Pfam" id="PF02182">
    <property type="entry name" value="SAD_SRA"/>
    <property type="match status" value="1"/>
</dbReference>
<dbReference type="Pfam" id="PF13920">
    <property type="entry name" value="zf-C3HC4_3"/>
    <property type="match status" value="1"/>
</dbReference>
<dbReference type="Pfam" id="PF13445">
    <property type="entry name" value="zf-RING_UBOX"/>
    <property type="match status" value="1"/>
</dbReference>
<dbReference type="SMART" id="SM00249">
    <property type="entry name" value="PHD"/>
    <property type="match status" value="1"/>
</dbReference>
<dbReference type="SMART" id="SM00184">
    <property type="entry name" value="RING"/>
    <property type="match status" value="2"/>
</dbReference>
<dbReference type="SMART" id="SM00466">
    <property type="entry name" value="SRA"/>
    <property type="match status" value="1"/>
</dbReference>
<dbReference type="SUPFAM" id="SSF57903">
    <property type="entry name" value="FYVE/PHD zinc finger"/>
    <property type="match status" value="1"/>
</dbReference>
<dbReference type="SUPFAM" id="SSF88697">
    <property type="entry name" value="PUA domain-like"/>
    <property type="match status" value="1"/>
</dbReference>
<dbReference type="SUPFAM" id="SSF57850">
    <property type="entry name" value="RING/U-box"/>
    <property type="match status" value="2"/>
</dbReference>
<dbReference type="PROSITE" id="PS51015">
    <property type="entry name" value="YDG"/>
    <property type="match status" value="1"/>
</dbReference>
<dbReference type="PROSITE" id="PS01359">
    <property type="entry name" value="ZF_PHD_1"/>
    <property type="match status" value="1"/>
</dbReference>
<dbReference type="PROSITE" id="PS00518">
    <property type="entry name" value="ZF_RING_1"/>
    <property type="match status" value="1"/>
</dbReference>
<dbReference type="PROSITE" id="PS50089">
    <property type="entry name" value="ZF_RING_2"/>
    <property type="match status" value="2"/>
</dbReference>
<accession>Q9FKA7</accession>
<accession>Q67XP0</accession>
<keyword id="KW-0156">Chromatin regulator</keyword>
<keyword id="KW-0175">Coiled coil</keyword>
<keyword id="KW-0238">DNA-binding</keyword>
<keyword id="KW-0479">Metal-binding</keyword>
<keyword id="KW-0539">Nucleus</keyword>
<keyword id="KW-1185">Reference proteome</keyword>
<keyword id="KW-0677">Repeat</keyword>
<keyword id="KW-0808">Transferase</keyword>
<keyword id="KW-0833">Ubl conjugation pathway</keyword>
<keyword id="KW-0862">Zinc</keyword>
<keyword id="KW-0863">Zinc-finger</keyword>
<gene>
    <name type="primary">ORTH1</name>
    <name type="synonym">VIM3</name>
    <name type="ordered locus">At5g39550</name>
    <name type="ORF">MIJ24.3</name>
</gene>
<protein>
    <recommendedName>
        <fullName>E3 ubiquitin-protein ligase ORTHRUS 1</fullName>
        <ecNumber>2.3.2.27</ecNumber>
    </recommendedName>
    <alternativeName>
        <fullName>Protein VARIANT IN METHYLATION 3</fullName>
    </alternativeName>
    <alternativeName>
        <fullName evidence="9">RING-type E3 ubiquitin transferase ORTHRUS 1</fullName>
    </alternativeName>
</protein>
<name>ORTH1_ARATH</name>
<proteinExistence type="evidence at protein level"/>
<comment type="function">
    <text evidence="6 7 8">E3 ubiquitin-protein ligase. Participates in CpG methylation-dependent transcriptional regulation and epigenetic transcriptional silencing. Mediates ubiquitination with the E2 ubiquitin-conjugating enzymes UBC11, UBC8 and UBC8 homologs (e.g. UBC10, UBC11, UBC28 and UBC29) but not with UBC27, UBC30, UBC32, UBC34 and UBC36. Promotes methylation-mediated gene silencing leading, for example, to early flowering. Can bind to CpG, CpNpG, and CpNpN DNA motifs, with a strong preference for methylated forms, and with highest affinity for CpG substrate.</text>
</comment>
<comment type="catalytic activity">
    <reaction>
        <text>S-ubiquitinyl-[E2 ubiquitin-conjugating enzyme]-L-cysteine + [acceptor protein]-L-lysine = [E2 ubiquitin-conjugating enzyme]-L-cysteine + N(6)-ubiquitinyl-[acceptor protein]-L-lysine.</text>
        <dbReference type="EC" id="2.3.2.27"/>
    </reaction>
</comment>
<comment type="pathway">
    <text>Protein modification; protein ubiquitination.</text>
</comment>
<comment type="subcellular location">
    <subcellularLocation>
        <location evidence="4 7 8">Nucleus</location>
    </subcellularLocation>
    <text>Broadly distributed in the nucleus and enriched in the heterochromatic chromocenters.</text>
</comment>
<comment type="tissue specificity">
    <text evidence="8">Expressed in inflorescences and leaves.</text>
</comment>
<comment type="domain">
    <text>The RING fingers are required for ubiquitin ligase activity.</text>
</comment>
<comment type="domain">
    <text evidence="1">The YDG domain mediates the interaction with histone H3.</text>
</comment>
<comment type="disruption phenotype">
    <text evidence="8">Decreased DNA methylation primarily at CpG sites in genic regions, as well as repeated sequences in heterochromatic regions. Released transcriptional silencing at heterochromatin regions. Ectopic CpHpH methylation in the 5S rRNA genes against a background of CpG hypomethylation.</text>
</comment>